<protein>
    <recommendedName>
        <fullName evidence="1">Ribosomal RNA small subunit methyltransferase B</fullName>
        <ecNumber evidence="1">2.1.1.176</ecNumber>
    </recommendedName>
    <alternativeName>
        <fullName evidence="1">16S rRNA m5C967 methyltransferase</fullName>
    </alternativeName>
    <alternativeName>
        <fullName evidence="1">rRNA (cytosine-C(5)-)-methyltransferase RsmB</fullName>
    </alternativeName>
</protein>
<sequence>MKKQNNLRSLAAQAVEQVVEQGQSLSNVLPPLQQKVADKDKALLQELCFGVLRTLSQLEWLINKLMSRPMTGKQRTVHYLIMVGFYQLLYTRVPPHAALAETVEGAVSIKRPQLKGLINGVLRQFQRQQETLLNEFATSDARFLHPGWLVKRLQNAYPTQWQRIIEANNQRPPMWLRVNRTHHTRDGWLGLLEDAGMKGYPHPDYPDAVRLETPAPVHALPGFAEGWVTVQDASAQGCAVFLAPQNGEHILDLCAAPGGKTTHILEVAPEADVVAVDIDEQRLSRVYDNLKRLGMKATVKQGDGRYPAQWCGEQQFDRILLDAPCSATGVIRRHPDIKWLRRDRDIAELAQLQAEILDAVWPRLKPGGTLVYATCSVLPEENRDQIKTFLQRTPDAALSETGTPDQPGQQNLPGGEEGDGFFYAKLIKK</sequence>
<feature type="chain" id="PRO_0000366173" description="Ribosomal RNA small subunit methyltransferase B">
    <location>
        <begin position="1"/>
        <end position="429"/>
    </location>
</feature>
<feature type="region of interest" description="Disordered" evidence="2">
    <location>
        <begin position="397"/>
        <end position="419"/>
    </location>
</feature>
<feature type="compositionally biased region" description="Polar residues" evidence="2">
    <location>
        <begin position="400"/>
        <end position="412"/>
    </location>
</feature>
<feature type="active site" description="Nucleophile" evidence="1">
    <location>
        <position position="375"/>
    </location>
</feature>
<feature type="binding site" evidence="1">
    <location>
        <begin position="254"/>
        <end position="260"/>
    </location>
    <ligand>
        <name>S-adenosyl-L-methionine</name>
        <dbReference type="ChEBI" id="CHEBI:59789"/>
    </ligand>
</feature>
<feature type="binding site" evidence="1">
    <location>
        <position position="277"/>
    </location>
    <ligand>
        <name>S-adenosyl-L-methionine</name>
        <dbReference type="ChEBI" id="CHEBI:59789"/>
    </ligand>
</feature>
<feature type="binding site" evidence="1">
    <location>
        <position position="303"/>
    </location>
    <ligand>
        <name>S-adenosyl-L-methionine</name>
        <dbReference type="ChEBI" id="CHEBI:59789"/>
    </ligand>
</feature>
<feature type="binding site" evidence="1">
    <location>
        <position position="322"/>
    </location>
    <ligand>
        <name>S-adenosyl-L-methionine</name>
        <dbReference type="ChEBI" id="CHEBI:59789"/>
    </ligand>
</feature>
<dbReference type="EC" id="2.1.1.176" evidence="1"/>
<dbReference type="EMBL" id="CP000886">
    <property type="protein sequence ID" value="ABX69566.1"/>
    <property type="molecule type" value="Genomic_DNA"/>
</dbReference>
<dbReference type="RefSeq" id="WP_000744614.1">
    <property type="nucleotide sequence ID" value="NC_010102.1"/>
</dbReference>
<dbReference type="SMR" id="A9N8B3"/>
<dbReference type="KEGG" id="spq:SPAB_04249"/>
<dbReference type="PATRIC" id="fig|1016998.12.peg.3996"/>
<dbReference type="HOGENOM" id="CLU_005316_0_4_6"/>
<dbReference type="BioCyc" id="SENT1016998:SPAB_RS17275-MONOMER"/>
<dbReference type="Proteomes" id="UP000008556">
    <property type="component" value="Chromosome"/>
</dbReference>
<dbReference type="GO" id="GO:0005829">
    <property type="term" value="C:cytosol"/>
    <property type="evidence" value="ECO:0007669"/>
    <property type="project" value="TreeGrafter"/>
</dbReference>
<dbReference type="GO" id="GO:0003723">
    <property type="term" value="F:RNA binding"/>
    <property type="evidence" value="ECO:0007669"/>
    <property type="project" value="UniProtKB-KW"/>
</dbReference>
<dbReference type="GO" id="GO:0009383">
    <property type="term" value="F:rRNA (cytosine-C5-)-methyltransferase activity"/>
    <property type="evidence" value="ECO:0007669"/>
    <property type="project" value="TreeGrafter"/>
</dbReference>
<dbReference type="GO" id="GO:0006355">
    <property type="term" value="P:regulation of DNA-templated transcription"/>
    <property type="evidence" value="ECO:0007669"/>
    <property type="project" value="InterPro"/>
</dbReference>
<dbReference type="GO" id="GO:0070475">
    <property type="term" value="P:rRNA base methylation"/>
    <property type="evidence" value="ECO:0007669"/>
    <property type="project" value="TreeGrafter"/>
</dbReference>
<dbReference type="CDD" id="cd02440">
    <property type="entry name" value="AdoMet_MTases"/>
    <property type="match status" value="1"/>
</dbReference>
<dbReference type="CDD" id="cd00620">
    <property type="entry name" value="Methyltransferase_Sun"/>
    <property type="match status" value="1"/>
</dbReference>
<dbReference type="FunFam" id="1.10.287.730:FF:000001">
    <property type="entry name" value="Ribosomal RNA small subunit methyltransferase B"/>
    <property type="match status" value="1"/>
</dbReference>
<dbReference type="FunFam" id="1.10.940.10:FF:000002">
    <property type="entry name" value="Ribosomal RNA small subunit methyltransferase B"/>
    <property type="match status" value="1"/>
</dbReference>
<dbReference type="FunFam" id="3.30.70.1170:FF:000002">
    <property type="entry name" value="Ribosomal RNA small subunit methyltransferase B"/>
    <property type="match status" value="1"/>
</dbReference>
<dbReference type="FunFam" id="3.40.50.150:FF:000022">
    <property type="entry name" value="Ribosomal RNA small subunit methyltransferase B"/>
    <property type="match status" value="1"/>
</dbReference>
<dbReference type="Gene3D" id="1.10.287.730">
    <property type="entry name" value="Helix hairpin bin"/>
    <property type="match status" value="1"/>
</dbReference>
<dbReference type="Gene3D" id="1.10.940.10">
    <property type="entry name" value="NusB-like"/>
    <property type="match status" value="1"/>
</dbReference>
<dbReference type="Gene3D" id="3.30.70.1170">
    <property type="entry name" value="Sun protein, domain 3"/>
    <property type="match status" value="1"/>
</dbReference>
<dbReference type="Gene3D" id="3.40.50.150">
    <property type="entry name" value="Vaccinia Virus protein VP39"/>
    <property type="match status" value="1"/>
</dbReference>
<dbReference type="HAMAP" id="MF_01856">
    <property type="entry name" value="16SrRNA_methyltr_B"/>
    <property type="match status" value="1"/>
</dbReference>
<dbReference type="InterPro" id="IPR049560">
    <property type="entry name" value="MeTrfase_RsmB-F_NOP2_cat"/>
</dbReference>
<dbReference type="InterPro" id="IPR001678">
    <property type="entry name" value="MeTrfase_RsmB-F_NOP2_dom"/>
</dbReference>
<dbReference type="InterPro" id="IPR035926">
    <property type="entry name" value="NusB-like_sf"/>
</dbReference>
<dbReference type="InterPro" id="IPR006027">
    <property type="entry name" value="NusB_RsmB_TIM44"/>
</dbReference>
<dbReference type="InterPro" id="IPR023267">
    <property type="entry name" value="RCMT"/>
</dbReference>
<dbReference type="InterPro" id="IPR004573">
    <property type="entry name" value="rRNA_ssu_MeTfrase_B"/>
</dbReference>
<dbReference type="InterPro" id="IPR023541">
    <property type="entry name" value="rRNA_ssu_MeTfrase_B_ent"/>
</dbReference>
<dbReference type="InterPro" id="IPR054728">
    <property type="entry name" value="RsmB-like_ferredoxin"/>
</dbReference>
<dbReference type="InterPro" id="IPR048019">
    <property type="entry name" value="RsmB-like_N"/>
</dbReference>
<dbReference type="InterPro" id="IPR018314">
    <property type="entry name" value="RsmB/NOL1/NOP2-like_CS"/>
</dbReference>
<dbReference type="InterPro" id="IPR029063">
    <property type="entry name" value="SAM-dependent_MTases_sf"/>
</dbReference>
<dbReference type="NCBIfam" id="NF008149">
    <property type="entry name" value="PRK10901.1"/>
    <property type="match status" value="1"/>
</dbReference>
<dbReference type="NCBIfam" id="NF011494">
    <property type="entry name" value="PRK14902.1"/>
    <property type="match status" value="1"/>
</dbReference>
<dbReference type="NCBIfam" id="TIGR00563">
    <property type="entry name" value="rsmB"/>
    <property type="match status" value="1"/>
</dbReference>
<dbReference type="PANTHER" id="PTHR22807:SF61">
    <property type="entry name" value="NOL1_NOP2_SUN FAMILY PROTEIN _ ANTITERMINATION NUSB DOMAIN-CONTAINING PROTEIN"/>
    <property type="match status" value="1"/>
</dbReference>
<dbReference type="PANTHER" id="PTHR22807">
    <property type="entry name" value="NOP2 YEAST -RELATED NOL1/NOP2/FMU SUN DOMAIN-CONTAINING"/>
    <property type="match status" value="1"/>
</dbReference>
<dbReference type="Pfam" id="PF01189">
    <property type="entry name" value="Methyltr_RsmB-F"/>
    <property type="match status" value="1"/>
</dbReference>
<dbReference type="Pfam" id="PF01029">
    <property type="entry name" value="NusB"/>
    <property type="match status" value="1"/>
</dbReference>
<dbReference type="Pfam" id="PF22458">
    <property type="entry name" value="RsmF-B_ferredox"/>
    <property type="match status" value="1"/>
</dbReference>
<dbReference type="PRINTS" id="PR02008">
    <property type="entry name" value="RCMTFAMILY"/>
</dbReference>
<dbReference type="SUPFAM" id="SSF48013">
    <property type="entry name" value="NusB-like"/>
    <property type="match status" value="1"/>
</dbReference>
<dbReference type="SUPFAM" id="SSF53335">
    <property type="entry name" value="S-adenosyl-L-methionine-dependent methyltransferases"/>
    <property type="match status" value="1"/>
</dbReference>
<dbReference type="PROSITE" id="PS01153">
    <property type="entry name" value="NOL1_NOP2_SUN"/>
    <property type="match status" value="1"/>
</dbReference>
<dbReference type="PROSITE" id="PS51686">
    <property type="entry name" value="SAM_MT_RSMB_NOP"/>
    <property type="match status" value="1"/>
</dbReference>
<evidence type="ECO:0000255" key="1">
    <source>
        <dbReference type="HAMAP-Rule" id="MF_01856"/>
    </source>
</evidence>
<evidence type="ECO:0000256" key="2">
    <source>
        <dbReference type="SAM" id="MobiDB-lite"/>
    </source>
</evidence>
<proteinExistence type="inferred from homology"/>
<name>RSMB_SALPB</name>
<keyword id="KW-0963">Cytoplasm</keyword>
<keyword id="KW-0489">Methyltransferase</keyword>
<keyword id="KW-0694">RNA-binding</keyword>
<keyword id="KW-0698">rRNA processing</keyword>
<keyword id="KW-0949">S-adenosyl-L-methionine</keyword>
<keyword id="KW-0808">Transferase</keyword>
<reference key="1">
    <citation type="submission" date="2007-11" db="EMBL/GenBank/DDBJ databases">
        <authorList>
            <consortium name="The Salmonella enterica serovar Paratyphi B Genome Sequencing Project"/>
            <person name="McClelland M."/>
            <person name="Sanderson E.K."/>
            <person name="Porwollik S."/>
            <person name="Spieth J."/>
            <person name="Clifton W.S."/>
            <person name="Fulton R."/>
            <person name="Cordes M."/>
            <person name="Wollam A."/>
            <person name="Shah N."/>
            <person name="Pepin K."/>
            <person name="Bhonagiri V."/>
            <person name="Nash W."/>
            <person name="Johnson M."/>
            <person name="Thiruvilangam P."/>
            <person name="Wilson R."/>
        </authorList>
    </citation>
    <scope>NUCLEOTIDE SEQUENCE [LARGE SCALE GENOMIC DNA]</scope>
    <source>
        <strain>ATCC BAA-1250 / SPB7</strain>
    </source>
</reference>
<gene>
    <name evidence="1" type="primary">rsmB</name>
    <name evidence="1" type="synonym">sun</name>
    <name type="ordered locus">SPAB_04249</name>
</gene>
<organism>
    <name type="scientific">Salmonella paratyphi B (strain ATCC BAA-1250 / SPB7)</name>
    <dbReference type="NCBI Taxonomy" id="1016998"/>
    <lineage>
        <taxon>Bacteria</taxon>
        <taxon>Pseudomonadati</taxon>
        <taxon>Pseudomonadota</taxon>
        <taxon>Gammaproteobacteria</taxon>
        <taxon>Enterobacterales</taxon>
        <taxon>Enterobacteriaceae</taxon>
        <taxon>Salmonella</taxon>
    </lineage>
</organism>
<accession>A9N8B3</accession>
<comment type="function">
    <text evidence="1">Specifically methylates the cytosine at position 967 (m5C967) of 16S rRNA.</text>
</comment>
<comment type="catalytic activity">
    <reaction evidence="1">
        <text>cytidine(967) in 16S rRNA + S-adenosyl-L-methionine = 5-methylcytidine(967) in 16S rRNA + S-adenosyl-L-homocysteine + H(+)</text>
        <dbReference type="Rhea" id="RHEA:42748"/>
        <dbReference type="Rhea" id="RHEA-COMP:10219"/>
        <dbReference type="Rhea" id="RHEA-COMP:10220"/>
        <dbReference type="ChEBI" id="CHEBI:15378"/>
        <dbReference type="ChEBI" id="CHEBI:57856"/>
        <dbReference type="ChEBI" id="CHEBI:59789"/>
        <dbReference type="ChEBI" id="CHEBI:74483"/>
        <dbReference type="ChEBI" id="CHEBI:82748"/>
        <dbReference type="EC" id="2.1.1.176"/>
    </reaction>
</comment>
<comment type="subcellular location">
    <subcellularLocation>
        <location evidence="1">Cytoplasm</location>
    </subcellularLocation>
</comment>
<comment type="similarity">
    <text evidence="1">Belongs to the class I-like SAM-binding methyltransferase superfamily. RsmB/NOP family.</text>
</comment>